<reference key="1">
    <citation type="journal article" date="2005" name="Science">
        <title>Extensive DNA inversions in the B. fragilis genome control variable gene expression.</title>
        <authorList>
            <person name="Cerdeno-Tarraga A.-M."/>
            <person name="Patrick S."/>
            <person name="Crossman L.C."/>
            <person name="Blakely G."/>
            <person name="Abratt V."/>
            <person name="Lennard N."/>
            <person name="Poxton I."/>
            <person name="Duerden B."/>
            <person name="Harris B."/>
            <person name="Quail M.A."/>
            <person name="Barron A."/>
            <person name="Clark L."/>
            <person name="Corton C."/>
            <person name="Doggett J."/>
            <person name="Holden M.T.G."/>
            <person name="Larke N."/>
            <person name="Line A."/>
            <person name="Lord A."/>
            <person name="Norbertczak H."/>
            <person name="Ormond D."/>
            <person name="Price C."/>
            <person name="Rabbinowitsch E."/>
            <person name="Woodward J."/>
            <person name="Barrell B.G."/>
            <person name="Parkhill J."/>
        </authorList>
    </citation>
    <scope>NUCLEOTIDE SEQUENCE [LARGE SCALE GENOMIC DNA]</scope>
    <source>
        <strain>ATCC 25285 / DSM 2151 / CCUG 4856 / JCM 11019 / LMG 10263 / NCTC 9343 / Onslow / VPI 2553 / EN-2</strain>
    </source>
</reference>
<feature type="chain" id="PRO_0000341715" description="2-succinyl-5-enolpyruvyl-6-hydroxy-3-cyclohexene-1-carboxylate synthase">
    <location>
        <begin position="1"/>
        <end position="555"/>
    </location>
</feature>
<accession>Q5LFS5</accession>
<protein>
    <recommendedName>
        <fullName evidence="1">2-succinyl-5-enolpyruvyl-6-hydroxy-3-cyclohexene-1-carboxylate synthase</fullName>
        <shortName evidence="1">SEPHCHC synthase</shortName>
        <ecNumber evidence="1">2.2.1.9</ecNumber>
    </recommendedName>
    <alternativeName>
        <fullName evidence="1">Menaquinone biosynthesis protein MenD</fullName>
    </alternativeName>
</protein>
<keyword id="KW-0460">Magnesium</keyword>
<keyword id="KW-0464">Manganese</keyword>
<keyword id="KW-0474">Menaquinone biosynthesis</keyword>
<keyword id="KW-0479">Metal-binding</keyword>
<keyword id="KW-0786">Thiamine pyrophosphate</keyword>
<keyword id="KW-0808">Transferase</keyword>
<dbReference type="EC" id="2.2.1.9" evidence="1"/>
<dbReference type="EMBL" id="CR626927">
    <property type="protein sequence ID" value="CAH07018.1"/>
    <property type="molecule type" value="Genomic_DNA"/>
</dbReference>
<dbReference type="RefSeq" id="WP_005786027.1">
    <property type="nucleotide sequence ID" value="NZ_UFTH01000001.1"/>
</dbReference>
<dbReference type="SMR" id="Q5LFS5"/>
<dbReference type="PaxDb" id="272559-BF9343_1237"/>
<dbReference type="DNASU" id="3289180"/>
<dbReference type="GeneID" id="60366635"/>
<dbReference type="KEGG" id="bfs:BF9343_1237"/>
<dbReference type="eggNOG" id="COG1165">
    <property type="taxonomic scope" value="Bacteria"/>
</dbReference>
<dbReference type="HOGENOM" id="CLU_006051_3_0_10"/>
<dbReference type="UniPathway" id="UPA00079"/>
<dbReference type="UniPathway" id="UPA01057">
    <property type="reaction ID" value="UER00164"/>
</dbReference>
<dbReference type="Proteomes" id="UP000006731">
    <property type="component" value="Chromosome"/>
</dbReference>
<dbReference type="GO" id="GO:0070204">
    <property type="term" value="F:2-succinyl-5-enolpyruvyl-6-hydroxy-3-cyclohexene-1-carboxylic-acid synthase activity"/>
    <property type="evidence" value="ECO:0007669"/>
    <property type="project" value="UniProtKB-UniRule"/>
</dbReference>
<dbReference type="GO" id="GO:0000287">
    <property type="term" value="F:magnesium ion binding"/>
    <property type="evidence" value="ECO:0007669"/>
    <property type="project" value="UniProtKB-UniRule"/>
</dbReference>
<dbReference type="GO" id="GO:0030145">
    <property type="term" value="F:manganese ion binding"/>
    <property type="evidence" value="ECO:0007669"/>
    <property type="project" value="UniProtKB-UniRule"/>
</dbReference>
<dbReference type="GO" id="GO:0030976">
    <property type="term" value="F:thiamine pyrophosphate binding"/>
    <property type="evidence" value="ECO:0007669"/>
    <property type="project" value="UniProtKB-UniRule"/>
</dbReference>
<dbReference type="GO" id="GO:0009234">
    <property type="term" value="P:menaquinone biosynthetic process"/>
    <property type="evidence" value="ECO:0007669"/>
    <property type="project" value="UniProtKB-UniRule"/>
</dbReference>
<dbReference type="CDD" id="cd07037">
    <property type="entry name" value="TPP_PYR_MenD"/>
    <property type="match status" value="1"/>
</dbReference>
<dbReference type="CDD" id="cd02009">
    <property type="entry name" value="TPP_SHCHC_synthase"/>
    <property type="match status" value="1"/>
</dbReference>
<dbReference type="Gene3D" id="3.40.50.970">
    <property type="match status" value="2"/>
</dbReference>
<dbReference type="Gene3D" id="3.40.50.1220">
    <property type="entry name" value="TPP-binding domain"/>
    <property type="match status" value="1"/>
</dbReference>
<dbReference type="HAMAP" id="MF_01659">
    <property type="entry name" value="MenD"/>
    <property type="match status" value="1"/>
</dbReference>
<dbReference type="InterPro" id="IPR004433">
    <property type="entry name" value="MenaQ_synth_MenD"/>
</dbReference>
<dbReference type="InterPro" id="IPR029061">
    <property type="entry name" value="THDP-binding"/>
</dbReference>
<dbReference type="InterPro" id="IPR012001">
    <property type="entry name" value="Thiamin_PyroP_enz_TPP-bd_dom"/>
</dbReference>
<dbReference type="NCBIfam" id="TIGR00173">
    <property type="entry name" value="menD"/>
    <property type="match status" value="1"/>
</dbReference>
<dbReference type="PANTHER" id="PTHR42916">
    <property type="entry name" value="2-SUCCINYL-5-ENOLPYRUVYL-6-HYDROXY-3-CYCLOHEXENE-1-CARBOXYLATE SYNTHASE"/>
    <property type="match status" value="1"/>
</dbReference>
<dbReference type="PANTHER" id="PTHR42916:SF1">
    <property type="entry name" value="PROTEIN PHYLLO, CHLOROPLASTIC"/>
    <property type="match status" value="1"/>
</dbReference>
<dbReference type="Pfam" id="PF02776">
    <property type="entry name" value="TPP_enzyme_N"/>
    <property type="match status" value="1"/>
</dbReference>
<dbReference type="PIRSF" id="PIRSF004983">
    <property type="entry name" value="MenD"/>
    <property type="match status" value="1"/>
</dbReference>
<dbReference type="SUPFAM" id="SSF52518">
    <property type="entry name" value="Thiamin diphosphate-binding fold (THDP-binding)"/>
    <property type="match status" value="2"/>
</dbReference>
<organism>
    <name type="scientific">Bacteroides fragilis (strain ATCC 25285 / DSM 2151 / CCUG 4856 / JCM 11019 / LMG 10263 / NCTC 9343 / Onslow / VPI 2553 / EN-2)</name>
    <dbReference type="NCBI Taxonomy" id="272559"/>
    <lineage>
        <taxon>Bacteria</taxon>
        <taxon>Pseudomonadati</taxon>
        <taxon>Bacteroidota</taxon>
        <taxon>Bacteroidia</taxon>
        <taxon>Bacteroidales</taxon>
        <taxon>Bacteroidaceae</taxon>
        <taxon>Bacteroides</taxon>
    </lineage>
</organism>
<proteinExistence type="inferred from homology"/>
<name>MEND_BACFN</name>
<gene>
    <name evidence="1" type="primary">menD</name>
    <name type="ordered locus">BF1301</name>
</gene>
<evidence type="ECO:0000255" key="1">
    <source>
        <dbReference type="HAMAP-Rule" id="MF_01659"/>
    </source>
</evidence>
<sequence>MYSDKKNILQLVALLRAHGVTKVVLCPGSRNAPIVHTLAGHPDFTCYSVTDERSAGFFAIGLALQGGTPAAVCCTSGTALLNLHPAIAEAYYQKVSLVVISADRPAAWINQMDGQTLPQPGVFRSLVKKSVDLPEIHTDEDEWYCNRLLNEALLELNHHGKGPVHINVPVSEPLFQFTAESLPEVRVITRYQGLNVYDRDYDGLIDRLNKYNRRMMIVGQMNLIYLFEKKYSKMLYKQFAWFTEHLGNQTVPGIPIRNFDAALYAMSPEMQEKMIPELVITYGGHIVSKRMKKYLRQHPPKEHWHVSPDGEVIDLFQGALTTIIEMDPFEFMEKIAFLLDNRTPEYPRQWENFCKELPRPELPYSEMSAIGSLIQALPASCALHLANSSAVRYAQLYSLPDTVEVCCNRGTSGIEGSLSTAIGYAAASKKLNFVVIGDLSFFYDMNALWNNHFGSNLRILLLNNGGGEIFHTLPGLEMSGTSHRFVTAVHKTSAKGWAEERGFLYQEVQDEKQLDEAMKTFTQPELLTQPVIMEVFTNKNKDARILKDYYHQLKN</sequence>
<comment type="function">
    <text evidence="1">Catalyzes the thiamine diphosphate-dependent decarboxylation of 2-oxoglutarate and the subsequent addition of the resulting succinic semialdehyde-thiamine pyrophosphate anion to isochorismate to yield 2-succinyl-5-enolpyruvyl-6-hydroxy-3-cyclohexene-1-carboxylate (SEPHCHC).</text>
</comment>
<comment type="catalytic activity">
    <reaction evidence="1">
        <text>isochorismate + 2-oxoglutarate + H(+) = 5-enolpyruvoyl-6-hydroxy-2-succinyl-cyclohex-3-ene-1-carboxylate + CO2</text>
        <dbReference type="Rhea" id="RHEA:25593"/>
        <dbReference type="ChEBI" id="CHEBI:15378"/>
        <dbReference type="ChEBI" id="CHEBI:16526"/>
        <dbReference type="ChEBI" id="CHEBI:16810"/>
        <dbReference type="ChEBI" id="CHEBI:29780"/>
        <dbReference type="ChEBI" id="CHEBI:58818"/>
        <dbReference type="EC" id="2.2.1.9"/>
    </reaction>
</comment>
<comment type="cofactor">
    <cofactor evidence="1">
        <name>Mg(2+)</name>
        <dbReference type="ChEBI" id="CHEBI:18420"/>
    </cofactor>
    <cofactor evidence="1">
        <name>Mn(2+)</name>
        <dbReference type="ChEBI" id="CHEBI:29035"/>
    </cofactor>
</comment>
<comment type="cofactor">
    <cofactor evidence="1">
        <name>thiamine diphosphate</name>
        <dbReference type="ChEBI" id="CHEBI:58937"/>
    </cofactor>
    <text evidence="1">Binds 1 thiamine pyrophosphate per subunit.</text>
</comment>
<comment type="pathway">
    <text evidence="1">Quinol/quinone metabolism; 1,4-dihydroxy-2-naphthoate biosynthesis; 1,4-dihydroxy-2-naphthoate from chorismate: step 2/7.</text>
</comment>
<comment type="pathway">
    <text evidence="1">Quinol/quinone metabolism; menaquinone biosynthesis.</text>
</comment>
<comment type="subunit">
    <text evidence="1">Homodimer.</text>
</comment>
<comment type="similarity">
    <text evidence="1">Belongs to the TPP enzyme family. MenD subfamily.</text>
</comment>